<protein>
    <recommendedName>
        <fullName evidence="3">Protein DOP1B</fullName>
    </recommendedName>
</protein>
<gene>
    <name type="primary">dop1b</name>
    <name type="synonym">dopey2</name>
</gene>
<keyword id="KW-0333">Golgi apparatus</keyword>
<keyword id="KW-0472">Membrane</keyword>
<keyword id="KW-0653">Protein transport</keyword>
<keyword id="KW-1185">Reference proteome</keyword>
<keyword id="KW-0813">Transport</keyword>
<proteinExistence type="evidence at transcript level"/>
<feature type="chain" id="PRO_0000297950" description="Protein DOP1B">
    <location>
        <begin position="1"/>
        <end position="2270"/>
    </location>
</feature>
<feature type="region of interest" description="Disordered" evidence="2">
    <location>
        <begin position="548"/>
        <end position="572"/>
    </location>
</feature>
<feature type="region of interest" description="Disordered" evidence="2">
    <location>
        <begin position="697"/>
        <end position="716"/>
    </location>
</feature>
<feature type="region of interest" description="Disordered" evidence="2">
    <location>
        <begin position="1084"/>
        <end position="1145"/>
    </location>
</feature>
<feature type="compositionally biased region" description="Polar residues" evidence="2">
    <location>
        <begin position="1095"/>
        <end position="1145"/>
    </location>
</feature>
<reference key="1">
    <citation type="submission" date="2004-08" db="EMBL/GenBank/DDBJ databases">
        <authorList>
            <consortium name="NIH - Xenopus Gene Collection (XGC) project"/>
        </authorList>
    </citation>
    <scope>NUCLEOTIDE SEQUENCE [LARGE SCALE MRNA]</scope>
    <source>
        <tissue>Brain</tissue>
    </source>
</reference>
<sequence>MDVEEQELLGDYRYRNYSSVIEKALRNFESSSEWADLISSLGKLNKALQTNLKYCLLPRRIIISKRLAQCLHPALPSGVHLKALETYEIIFKIIGTKCLAKDLFLYSSGLFPLLSHAAMSVRPILLGLYETYFIPLQRALLPSLQAFITGLLPGLEEGSEIYERTDQLLQRLSVVVGQNVFYGSLWGSVLVSSSIRLPASLFVVSHINKDLSAQSQSYMLGKDQELAIKSLCASVVDSNVLVQRNTLEILLFFFPFNTCLVPDECSMLLHRSDMVRILAGSIQTVLRRDMSLNRRLFAWLLGSDIKGRHMAPELKDSSGDEEYCNHFFARYSKDLLVEALMQILHQNTLASDTEQGLLVYLKPFRILVSLLDKPEIGPPVVGELFLEVMRAFIAYCRDALGTQMQLSYSQNGAQLISAIKENKNASEIVKTVNLLISSLSSDFLWDYMTICFEDSFRRKDHDTPAGNYLGRAPSITEVCSLLVFLLDVIPLELYSEVQTQYLPQMLSFMAHSLSDNMDVLSLPELTLALKTCFKVLSKVQMPPAFLDMETPSSDTDPLKESENNPAPEVEGEMADDDPVFHPLKSEDSGIGLSASSPELSKHLRMPRVCPDKGDVWKKGGSMQMTLHCFQELVANFASKHLFRIQLKGEGQNSPENGVMTENDMNTKKRGSWQPKQITGPQFKQMLTDFFTPRAPMLKQRSEQSPNKTTNKETEEEWDIERLLQNTGEMKEDCREALAAACHVLLDCATFPVYMSEEETEHLYSVLSQVPGSSDVSFPLWFKTLMMVCCCVKDCYIQNVAISTLLEVINHSQSLSLVLADRMKRSKTPGFGEVFGKLQMVTIPPVSPGVLKLIADKTDFYPRVAHVLWNQLNIETREHHITCVELFYRLHCLAPSANICEEIICQTLLHNDKLTRLEALFRFSVIWHLTREIQGSRVTSHNRSFDRSLFVVLDSLNCSDGAIGAAAQGWLVRALSLNDVARILEAVFLLLLHPKTQRNSIHCIKQKNSSEEFSYWCRKKRTSLKDLAAFRDSPLSSSEENLPQFNTVDRDALWAEVEKDPEKIKNELTEKRPADFRDAPYCVEQEQDYSEHTESADTSTGHNDSDNTSSFTPSSVDLSSDQNYRDNTAGQVTHKNTGQQNMDMPRQNTLLTLVRTESDVTQTSESLSSDDEADLELQAIRSSQLLKQQKEKEEMIEALFKHILLYLQPYDSKRVLYAFTVLEAILKTNPKEFIESVAATSMDTSSTAHLNLIYNLLARHQEALVGQSFYGKLQTQSPLMCPHSLLIELLTYLCLSFLRSYYPCYLKVSHKDVLGNRDVQVKSVEVLIRIMSQLVNIAKSAEGKKVEFIRFLLERCKVQEFVLLSLSASMYTSQKKYELMSAGGNRGIDLGFFEEGIINFGQDQIWSEHPLQIELLKLLQVLIVLEHHLRQLQDDQDTHGDLTKEWQRGINFQQSINAMQYVQAHSITSQGLFVSAVVKALRPDYGYGMHPQWVALVTSSLPFFGKSLGLTVAPFVVQICKNLDELVKQYENESFKISTTSKRENVSPDYPLTLLEGLTMIGHFCLLDHPTQSKKSSSSDPANLKNARNALLEELPRIINTMSLLWSIISKQEREKRPSDLLGTIKASSSVYFKSTKTLKQKILDFLNPLTSHLGVQLIAAVAAVWKKKRFNKSLSKAKILPVPSESQLIFVDLVCALKTLKTDTILHLVKEVVKKPPQIKGDEKSSLVDIPMLQFSYTFIQRLSGSELQENSQSLLALLKESVPLNLAPPGFFLLLSMLNDFVTRTPNLESKKDQKELQEVTQKILEAVGNVAGSSLEQTSWLSRNLEVKAQPQISLDDAEAEEEDLNDDSVVAQSSMVSASAPSMYSVQALSLLAEVLANLLDMVYRSDEKEKAVPLISRLLYYVFPYLRNHSAYNIPSFRAGAQLLSSLSGYAYTKRAWKKEVLDLYMDPGFFQMDTSCVHWKAIIDHFLTHEKTMFKDLMSMPSSSLKLYSSSEQKAMLLKRQGFAVLSGEVDQYHQYLPLIQERLTENIRMGQTPNMAAQMYLFFRVLLLRISPQHLTSLWPIMVTELIHTFVQLQEDLMDEVPTKSSKASKHKTATAEVNGTVYCEIQQSALELYLSACKFLDTALSIPPDKMPLFQLYRWAFVPEVDTEACSVPSEKVENYQECKPHVLRILELLRFRFGEKTTEDPKWKRTEFPLLNLHSICSVTQLTPFFRTLGYAFKAKGETTGESQGSEPTIEYPVEDFTKVLKELEENVESDFLEKLGS</sequence>
<accession>Q642P2</accession>
<organism>
    <name type="scientific">Xenopus laevis</name>
    <name type="common">African clawed frog</name>
    <dbReference type="NCBI Taxonomy" id="8355"/>
    <lineage>
        <taxon>Eukaryota</taxon>
        <taxon>Metazoa</taxon>
        <taxon>Chordata</taxon>
        <taxon>Craniata</taxon>
        <taxon>Vertebrata</taxon>
        <taxon>Euteleostomi</taxon>
        <taxon>Amphibia</taxon>
        <taxon>Batrachia</taxon>
        <taxon>Anura</taxon>
        <taxon>Pipoidea</taxon>
        <taxon>Pipidae</taxon>
        <taxon>Xenopodinae</taxon>
        <taxon>Xenopus</taxon>
        <taxon>Xenopus</taxon>
    </lineage>
</organism>
<name>DOP1B_XENLA</name>
<comment type="function">
    <text evidence="1">May be involved in protein traffic between late Golgi and early endosomes.</text>
</comment>
<comment type="subcellular location">
    <subcellularLocation>
        <location evidence="1">Golgi apparatus membrane</location>
        <topology evidence="1">Peripheral membrane protein</topology>
    </subcellularLocation>
</comment>
<comment type="similarity">
    <text evidence="3">Belongs to the DOP1 family.</text>
</comment>
<evidence type="ECO:0000250" key="1">
    <source>
        <dbReference type="UniProtKB" id="Q03921"/>
    </source>
</evidence>
<evidence type="ECO:0000256" key="2">
    <source>
        <dbReference type="SAM" id="MobiDB-lite"/>
    </source>
</evidence>
<evidence type="ECO:0000305" key="3"/>
<dbReference type="EMBL" id="BC081251">
    <property type="protein sequence ID" value="AAH81251.1"/>
    <property type="molecule type" value="mRNA"/>
</dbReference>
<dbReference type="RefSeq" id="NP_001087807.1">
    <property type="nucleotide sequence ID" value="NM_001094338.1"/>
</dbReference>
<dbReference type="RefSeq" id="XP_018103856.1">
    <property type="nucleotide sequence ID" value="XM_018248367.1"/>
</dbReference>
<dbReference type="GeneID" id="447631"/>
<dbReference type="KEGG" id="xla:447631"/>
<dbReference type="AGR" id="Xenbase:XB-GENE-1217371"/>
<dbReference type="CTD" id="447631"/>
<dbReference type="Xenbase" id="XB-GENE-1217371">
    <property type="gene designation" value="dop1b.S"/>
</dbReference>
<dbReference type="OMA" id="LWEYMTQ"/>
<dbReference type="OrthoDB" id="297643at2759"/>
<dbReference type="Proteomes" id="UP000186698">
    <property type="component" value="Chromosome 2S"/>
</dbReference>
<dbReference type="Bgee" id="447631">
    <property type="expression patterns" value="Expressed in egg cell and 16 other cell types or tissues"/>
</dbReference>
<dbReference type="GO" id="GO:0005829">
    <property type="term" value="C:cytosol"/>
    <property type="evidence" value="ECO:0007669"/>
    <property type="project" value="GOC"/>
</dbReference>
<dbReference type="GO" id="GO:0005768">
    <property type="term" value="C:endosome"/>
    <property type="evidence" value="ECO:0000318"/>
    <property type="project" value="GO_Central"/>
</dbReference>
<dbReference type="GO" id="GO:0000139">
    <property type="term" value="C:Golgi membrane"/>
    <property type="evidence" value="ECO:0007669"/>
    <property type="project" value="UniProtKB-SubCell"/>
</dbReference>
<dbReference type="GO" id="GO:0005802">
    <property type="term" value="C:trans-Golgi network"/>
    <property type="evidence" value="ECO:0000318"/>
    <property type="project" value="GO_Central"/>
</dbReference>
<dbReference type="GO" id="GO:0006895">
    <property type="term" value="P:Golgi to endosome transport"/>
    <property type="evidence" value="ECO:0007669"/>
    <property type="project" value="InterPro"/>
</dbReference>
<dbReference type="GO" id="GO:0015031">
    <property type="term" value="P:protein transport"/>
    <property type="evidence" value="ECO:0007669"/>
    <property type="project" value="UniProtKB-KW"/>
</dbReference>
<dbReference type="InterPro" id="IPR040314">
    <property type="entry name" value="DOP1"/>
</dbReference>
<dbReference type="InterPro" id="IPR056457">
    <property type="entry name" value="DOP1_C"/>
</dbReference>
<dbReference type="InterPro" id="IPR007249">
    <property type="entry name" value="DOP1_N"/>
</dbReference>
<dbReference type="InterPro" id="IPR056459">
    <property type="entry name" value="TPR_DOP1"/>
</dbReference>
<dbReference type="InterPro" id="IPR056458">
    <property type="entry name" value="TPR_DOP1_M"/>
</dbReference>
<dbReference type="PANTHER" id="PTHR14042">
    <property type="entry name" value="DOPEY-RELATED"/>
    <property type="match status" value="1"/>
</dbReference>
<dbReference type="PANTHER" id="PTHR14042:SF23">
    <property type="entry name" value="PROTEIN DOPEY-2"/>
    <property type="match status" value="1"/>
</dbReference>
<dbReference type="Pfam" id="PF24598">
    <property type="entry name" value="DOP1_C"/>
    <property type="match status" value="1"/>
</dbReference>
<dbReference type="Pfam" id="PF04118">
    <property type="entry name" value="Dopey_N"/>
    <property type="match status" value="1"/>
</dbReference>
<dbReference type="Pfam" id="PF24601">
    <property type="entry name" value="TPR_DOP1"/>
    <property type="match status" value="1"/>
</dbReference>
<dbReference type="Pfam" id="PF24597">
    <property type="entry name" value="TPR_DOP1_M"/>
    <property type="match status" value="1"/>
</dbReference>